<organism>
    <name type="scientific">Rattus norvegicus</name>
    <name type="common">Rat</name>
    <dbReference type="NCBI Taxonomy" id="10116"/>
    <lineage>
        <taxon>Eukaryota</taxon>
        <taxon>Metazoa</taxon>
        <taxon>Chordata</taxon>
        <taxon>Craniata</taxon>
        <taxon>Vertebrata</taxon>
        <taxon>Euteleostomi</taxon>
        <taxon>Mammalia</taxon>
        <taxon>Eutheria</taxon>
        <taxon>Euarchontoglires</taxon>
        <taxon>Glires</taxon>
        <taxon>Rodentia</taxon>
        <taxon>Myomorpha</taxon>
        <taxon>Muroidea</taxon>
        <taxon>Muridae</taxon>
        <taxon>Murinae</taxon>
        <taxon>Rattus</taxon>
    </lineage>
</organism>
<reference key="1">
    <citation type="journal article" date="1999" name="J. Biol. Chem.">
        <title>Molecular cloning and functional characterization of brefeldin A-ADP-ribosylated substrate. A novel protein involved in the maintenance of the Golgi structure.</title>
        <authorList>
            <person name="Spano S."/>
            <person name="Silletta M.G."/>
            <person name="Colanzi A."/>
            <person name="Alberti S."/>
            <person name="Fiucci G."/>
            <person name="Valente C."/>
            <person name="Fusella A."/>
            <person name="Salmona M."/>
            <person name="Mironov A."/>
            <person name="Luini A."/>
            <person name="Corda D."/>
        </authorList>
    </citation>
    <scope>NUCLEOTIDE SEQUENCE [MRNA]</scope>
    <scope>PARTIAL PROTEIN SEQUENCE</scope>
    <scope>FUNCTION</scope>
    <scope>SUBCELLULAR LOCATION</scope>
    <source>
        <strain>Sprague-Dawley</strain>
        <tissue>Brain</tissue>
    </source>
</reference>
<reference key="2">
    <citation type="journal article" date="1999" name="J. Biol. Chem.">
        <authorList>
            <person name="Spano S."/>
            <person name="Silletta M.G."/>
            <person name="Colanzi A."/>
            <person name="Alberti S."/>
            <person name="Fiucci G."/>
            <person name="Valente C."/>
            <person name="Fusella A."/>
            <person name="Salmona M."/>
            <person name="Mironov A."/>
            <person name="Luini A."/>
            <person name="Corda D."/>
        </authorList>
    </citation>
    <scope>ERRATUM OF PUBMED:10364211</scope>
</reference>
<reference key="3">
    <citation type="submission" date="2001-05" db="UniProtKB">
        <authorList>
            <person name="Spano S."/>
            <person name="Silletta M.G."/>
            <person name="Colanzi A."/>
            <person name="Alberti S."/>
            <person name="Fiucci G."/>
            <person name="Valente C."/>
            <person name="Fusella A."/>
            <person name="Salmona M."/>
            <person name="Mironov A."/>
            <person name="Luini A."/>
            <person name="Corda D."/>
        </authorList>
    </citation>
    <scope>SEQUENCE REVISION TO 259</scope>
</reference>
<reference key="4">
    <citation type="submission" date="2007-04" db="UniProtKB">
        <authorList>
            <person name="Lubec G."/>
            <person name="Diao W."/>
        </authorList>
    </citation>
    <scope>PROTEIN SEQUENCE OF 275-294</scope>
    <scope>IDENTIFICATION BY MASS SPECTROMETRY</scope>
    <source>
        <strain>Sprague-Dawley</strain>
        <tissue>Hippocampus</tissue>
    </source>
</reference>
<reference key="5">
    <citation type="journal article" date="1995" name="Proc. Natl. Acad. Sci. U.S.A.">
        <title>Evidence that the 50-kDa substrate of brefeldin A-dependent ADP-ribosylation binds GTP and is modulated by the G-protein beta gamma subunit complex.</title>
        <authorList>
            <person name="Di Girolamo M."/>
            <person name="Silletta M.G."/>
            <person name="De Matteis M.A."/>
            <person name="Braca A."/>
            <person name="Colanzi A."/>
            <person name="Pawlak D."/>
            <person name="Rasenick M.M."/>
            <person name="Luini A."/>
            <person name="Corda D."/>
        </authorList>
    </citation>
    <scope>FUNCTION</scope>
    <scope>ADP-RIBOSYLATION</scope>
    <scope>SUBCELLULAR LOCATION</scope>
</reference>
<reference key="6">
    <citation type="journal article" date="2015" name="EMBO J.">
        <title>Synaptic activity controls localization and function of CtBP1 via binding to Bassoon and Piccolo.</title>
        <authorList>
            <person name="Ivanova D."/>
            <person name="Dirks A."/>
            <person name="Montenegro-Venegas C."/>
            <person name="Schoene C."/>
            <person name="Altrock W.D."/>
            <person name="Marini C."/>
            <person name="Frischknecht R."/>
            <person name="Schanze D."/>
            <person name="Zenker M."/>
            <person name="Gundelfinger E.D."/>
            <person name="Fejtova A."/>
        </authorList>
    </citation>
    <scope>INTERACTION WITH CTBP1</scope>
    <scope>SUBCELLULAR LOCATION</scope>
</reference>
<reference key="7">
    <citation type="journal article" date="2003" name="EMBO J.">
        <title>CtBP/BARS: a dual-function protein involved in transcription co-repression and Golgi membrane fission.</title>
        <authorList>
            <person name="Nardini M."/>
            <person name="Spano S."/>
            <person name="Cericola C."/>
            <person name="Pesce A."/>
            <person name="Massaro A."/>
            <person name="Millo E."/>
            <person name="Luini A."/>
            <person name="Corda D."/>
            <person name="Bolognesi M."/>
        </authorList>
    </citation>
    <scope>X-RAY CRYSTALLOGRAPHY (2.3 ANGSTROMS) OF 1-349 IN COMPLEX WITH NADH</scope>
    <scope>FUNCTION</scope>
    <scope>MUTAGENESIS OF ALA-41 AND VAL-55</scope>
</reference>
<reference key="8">
    <citation type="journal article" date="2006" name="Mol. Cell. Biol.">
        <title>Specific recognition of ZNF217 and other zinc finger proteins at a surface groove of C-terminal binding proteins.</title>
        <authorList>
            <person name="Quinlan K.G.R."/>
            <person name="Nardini M."/>
            <person name="Verger A."/>
            <person name="Francescato P."/>
            <person name="Yaswen P."/>
            <person name="Corda D."/>
            <person name="Bolognesi M."/>
            <person name="Crossley M."/>
        </authorList>
    </citation>
    <scope>X-RAY CRYSTALLOGRAPHY (2.85 ANGSTROMS) OF 1-350 IN COMPLEX WITH NAD AND ZNF217</scope>
    <scope>INTERACTION WITH ZNF217</scope>
</reference>
<reference key="9">
    <citation type="journal article" date="2009" name="Biochem. Biophys. Res. Commun.">
        <title>CtBP1/BARS Gly172--&gt;Glu mutant structure: impairing NAD(H)-binding and dimerization.</title>
        <authorList>
            <person name="Nardini M."/>
            <person name="Valente C."/>
            <person name="Ricagno S."/>
            <person name="Luini A."/>
            <person name="Corda D."/>
            <person name="Bolognesi M."/>
        </authorList>
    </citation>
    <scope>X-RAY CRYSTALLOGRAPHY (3.4 ANGSTROMS) OF 1-350 OF MUTANT GLU-172</scope>
    <scope>NAD BINDING</scope>
    <scope>SUBUNIT</scope>
    <scope>MUTAGENESIS OF GLY-172</scope>
</reference>
<feature type="chain" id="PRO_0000076043" description="C-terminal-binding protein 1">
    <location>
        <begin position="1"/>
        <end position="430"/>
    </location>
</feature>
<feature type="region of interest" description="Interaction with GLIS2 1" evidence="1">
    <location>
        <begin position="1"/>
        <end position="59"/>
    </location>
</feature>
<feature type="region of interest" description="Interaction with GLIS2 2" evidence="1">
    <location>
        <begin position="277"/>
        <end position="349"/>
    </location>
</feature>
<feature type="region of interest" description="Disordered" evidence="4">
    <location>
        <begin position="398"/>
        <end position="430"/>
    </location>
</feature>
<feature type="compositionally biased region" description="Basic and acidic residues" evidence="4">
    <location>
        <begin position="419"/>
        <end position="430"/>
    </location>
</feature>
<feature type="active site" evidence="1">
    <location>
        <position position="255"/>
    </location>
</feature>
<feature type="active site" evidence="1">
    <location>
        <position position="284"/>
    </location>
</feature>
<feature type="active site" description="Proton donor" evidence="1">
    <location>
        <position position="304"/>
    </location>
</feature>
<feature type="binding site" evidence="6 7">
    <location>
        <position position="89"/>
    </location>
    <ligand>
        <name>NAD(+)</name>
        <dbReference type="ChEBI" id="CHEBI:57540"/>
    </ligand>
</feature>
<feature type="binding site" evidence="6 7">
    <location>
        <begin position="169"/>
        <end position="174"/>
    </location>
    <ligand>
        <name>NAD(+)</name>
        <dbReference type="ChEBI" id="CHEBI:57540"/>
    </ligand>
</feature>
<feature type="binding site" evidence="6 7">
    <location>
        <position position="193"/>
    </location>
    <ligand>
        <name>NAD(+)</name>
        <dbReference type="ChEBI" id="CHEBI:57540"/>
    </ligand>
</feature>
<feature type="binding site" evidence="6 7">
    <location>
        <begin position="226"/>
        <end position="232"/>
    </location>
    <ligand>
        <name>NAD(+)</name>
        <dbReference type="ChEBI" id="CHEBI:57540"/>
    </ligand>
</feature>
<feature type="binding site" evidence="6 7">
    <location>
        <begin position="253"/>
        <end position="255"/>
    </location>
    <ligand>
        <name>NAD(+)</name>
        <dbReference type="ChEBI" id="CHEBI:57540"/>
    </ligand>
</feature>
<feature type="binding site" evidence="6 7">
    <location>
        <position position="279"/>
    </location>
    <ligand>
        <name>NAD(+)</name>
        <dbReference type="ChEBI" id="CHEBI:57540"/>
    </ligand>
</feature>
<feature type="site" description="Cleavage; by CAPN1" evidence="3">
    <location>
        <begin position="364"/>
        <end position="365"/>
    </location>
</feature>
<feature type="site" description="Cleavage; by CAPN1" evidence="3">
    <location>
        <begin position="377"/>
        <end position="378"/>
    </location>
</feature>
<feature type="site" description="Cleavage; by CAPN1 and CAPN3" evidence="3">
    <location>
        <begin position="399"/>
        <end position="400"/>
    </location>
</feature>
<feature type="modified residue" description="Phosphoserine" evidence="3">
    <location>
        <position position="289"/>
    </location>
</feature>
<feature type="modified residue" description="Phosphoserine" evidence="3">
    <location>
        <position position="412"/>
    </location>
</feature>
<feature type="cross-link" description="Glycyl lysine isopeptide (Lys-Gly) (interchain with G-Cter in SUMO)" evidence="1">
    <location>
        <position position="418"/>
    </location>
</feature>
<feature type="mutagenesis site" description="Strongly reduces interaction with E1A." evidence="6">
    <original>A</original>
    <variation>E</variation>
    <location>
        <position position="41"/>
    </location>
</feature>
<feature type="mutagenesis site" description="Strongly reduces interaction with E1A." evidence="6">
    <original>V</original>
    <variation>R</variation>
    <location>
        <position position="55"/>
    </location>
</feature>
<feature type="mutagenesis site" description="Loss dimerization and of NAD binding." evidence="8">
    <original>G</original>
    <variation>E</variation>
    <location>
        <position position="172"/>
    </location>
</feature>
<feature type="sequence conflict" description="In Ref. 1; AA sequence." evidence="11" ref="1">
    <original>G</original>
    <variation>S</variation>
    <location>
        <position position="175"/>
    </location>
</feature>
<feature type="strand" evidence="12">
    <location>
        <begin position="18"/>
        <end position="23"/>
    </location>
</feature>
<feature type="turn" evidence="12">
    <location>
        <begin position="28"/>
        <end position="30"/>
    </location>
</feature>
<feature type="helix" evidence="12">
    <location>
        <begin position="31"/>
        <end position="34"/>
    </location>
</feature>
<feature type="turn" evidence="12">
    <location>
        <begin position="35"/>
        <end position="37"/>
    </location>
</feature>
<feature type="strand" evidence="12">
    <location>
        <begin position="39"/>
        <end position="42"/>
    </location>
</feature>
<feature type="helix" evidence="12">
    <location>
        <begin position="48"/>
        <end position="50"/>
    </location>
</feature>
<feature type="helix" evidence="12">
    <location>
        <begin position="53"/>
        <end position="58"/>
    </location>
</feature>
<feature type="strand" evidence="12">
    <location>
        <begin position="59"/>
        <end position="64"/>
    </location>
</feature>
<feature type="strand" evidence="12">
    <location>
        <begin position="66"/>
        <end position="68"/>
    </location>
</feature>
<feature type="helix" evidence="12">
    <location>
        <begin position="72"/>
        <end position="76"/>
    </location>
</feature>
<feature type="strand" evidence="12">
    <location>
        <begin position="83"/>
        <end position="89"/>
    </location>
</feature>
<feature type="strand" evidence="13">
    <location>
        <begin position="92"/>
        <end position="94"/>
    </location>
</feature>
<feature type="helix" evidence="12">
    <location>
        <begin position="96"/>
        <end position="101"/>
    </location>
</feature>
<feature type="strand" evidence="12">
    <location>
        <begin position="105"/>
        <end position="107"/>
    </location>
</feature>
<feature type="strand" evidence="12">
    <location>
        <begin position="111"/>
        <end position="113"/>
    </location>
</feature>
<feature type="helix" evidence="12">
    <location>
        <begin position="114"/>
        <end position="130"/>
    </location>
</feature>
<feature type="helix" evidence="12">
    <location>
        <begin position="132"/>
        <end position="140"/>
    </location>
</feature>
<feature type="helix" evidence="12">
    <location>
        <begin position="148"/>
        <end position="154"/>
    </location>
</feature>
<feature type="turn" evidence="12">
    <location>
        <begin position="155"/>
        <end position="157"/>
    </location>
</feature>
<feature type="strand" evidence="12">
    <location>
        <begin position="165"/>
        <end position="169"/>
    </location>
</feature>
<feature type="helix" evidence="12">
    <location>
        <begin position="173"/>
        <end position="183"/>
    </location>
</feature>
<feature type="turn" evidence="12">
    <location>
        <begin position="184"/>
        <end position="186"/>
    </location>
</feature>
<feature type="strand" evidence="12">
    <location>
        <begin position="188"/>
        <end position="192"/>
    </location>
</feature>
<feature type="strand" evidence="14">
    <location>
        <begin position="194"/>
        <end position="196"/>
    </location>
</feature>
<feature type="helix" evidence="12">
    <location>
        <begin position="200"/>
        <end position="203"/>
    </location>
</feature>
<feature type="helix" evidence="12">
    <location>
        <begin position="212"/>
        <end position="218"/>
    </location>
</feature>
<feature type="strand" evidence="12">
    <location>
        <begin position="220"/>
        <end position="224"/>
    </location>
</feature>
<feature type="strand" evidence="13">
    <location>
        <begin position="230"/>
        <end position="232"/>
    </location>
</feature>
<feature type="helix" evidence="12">
    <location>
        <begin position="238"/>
        <end position="243"/>
    </location>
</feature>
<feature type="strand" evidence="12">
    <location>
        <begin position="248"/>
        <end position="252"/>
    </location>
</feature>
<feature type="helix" evidence="12">
    <location>
        <begin position="256"/>
        <end position="258"/>
    </location>
</feature>
<feature type="helix" evidence="12">
    <location>
        <begin position="261"/>
        <end position="269"/>
    </location>
</feature>
<feature type="strand" evidence="12">
    <location>
        <begin position="272"/>
        <end position="279"/>
    </location>
</feature>
<feature type="strand" evidence="12">
    <location>
        <begin position="282"/>
        <end position="285"/>
    </location>
</feature>
<feature type="strand" evidence="13">
    <location>
        <begin position="288"/>
        <end position="291"/>
    </location>
</feature>
<feature type="turn" evidence="12">
    <location>
        <begin position="292"/>
        <end position="295"/>
    </location>
</feature>
<feature type="strand" evidence="12">
    <location>
        <begin position="297"/>
        <end position="301"/>
    </location>
</feature>
<feature type="helix" evidence="12">
    <location>
        <begin position="310"/>
        <end position="329"/>
    </location>
</feature>
<feature type="turn" evidence="12">
    <location>
        <begin position="332"/>
        <end position="334"/>
    </location>
</feature>
<feature type="strand" evidence="12">
    <location>
        <begin position="337"/>
        <end position="340"/>
    </location>
</feature>
<feature type="helix" evidence="14">
    <location>
        <begin position="342"/>
        <end position="344"/>
    </location>
</feature>
<accession>Q9Z2F5</accession>
<dbReference type="EC" id="1.1.1.-"/>
<dbReference type="EMBL" id="AF067795">
    <property type="protein sequence ID" value="AAC79427.2"/>
    <property type="molecule type" value="mRNA"/>
</dbReference>
<dbReference type="RefSeq" id="NP_062074.2">
    <property type="nucleotide sequence ID" value="NM_019201.3"/>
</dbReference>
<dbReference type="RefSeq" id="XP_017454636.1">
    <property type="nucleotide sequence ID" value="XM_017599147.3"/>
</dbReference>
<dbReference type="RefSeq" id="XP_063129063.1">
    <property type="nucleotide sequence ID" value="XM_063272993.1"/>
</dbReference>
<dbReference type="PDB" id="1HKU">
    <property type="method" value="X-ray"/>
    <property type="resolution" value="2.30 A"/>
    <property type="chains" value="A=1-350"/>
</dbReference>
<dbReference type="PDB" id="1HL3">
    <property type="method" value="X-ray"/>
    <property type="resolution" value="3.10 A"/>
    <property type="chains" value="A=1-350"/>
</dbReference>
<dbReference type="PDB" id="2HU2">
    <property type="method" value="X-ray"/>
    <property type="resolution" value="2.85 A"/>
    <property type="chains" value="A=1-350"/>
</dbReference>
<dbReference type="PDB" id="3GA0">
    <property type="method" value="X-ray"/>
    <property type="resolution" value="3.40 A"/>
    <property type="chains" value="A=1-350"/>
</dbReference>
<dbReference type="PDBsum" id="1HKU"/>
<dbReference type="PDBsum" id="1HL3"/>
<dbReference type="PDBsum" id="2HU2"/>
<dbReference type="PDBsum" id="3GA0"/>
<dbReference type="SMR" id="Q9Z2F5"/>
<dbReference type="BioGRID" id="248034">
    <property type="interactions" value="4"/>
</dbReference>
<dbReference type="FunCoup" id="Q9Z2F5">
    <property type="interactions" value="3381"/>
</dbReference>
<dbReference type="IntAct" id="Q9Z2F5">
    <property type="interactions" value="5"/>
</dbReference>
<dbReference type="MINT" id="Q9Z2F5"/>
<dbReference type="STRING" id="10116.ENSRNOP00000062945"/>
<dbReference type="GlyGen" id="Q9Z2F5">
    <property type="glycosylation" value="1 site, 1 O-linked glycan (1 site)"/>
</dbReference>
<dbReference type="iPTMnet" id="Q9Z2F5"/>
<dbReference type="PhosphoSitePlus" id="Q9Z2F5"/>
<dbReference type="jPOST" id="Q9Z2F5"/>
<dbReference type="PaxDb" id="10116-ENSRNOP00000062945"/>
<dbReference type="Ensembl" id="ENSRNOT00000112665.1">
    <property type="protein sequence ID" value="ENSRNOP00000080240.1"/>
    <property type="gene ID" value="ENSRNOG00000005428.9"/>
</dbReference>
<dbReference type="GeneID" id="29382"/>
<dbReference type="KEGG" id="rno:29382"/>
<dbReference type="UCSC" id="RGD:2441">
    <property type="organism name" value="rat"/>
</dbReference>
<dbReference type="AGR" id="RGD:2441"/>
<dbReference type="CTD" id="1487"/>
<dbReference type="RGD" id="2441">
    <property type="gene designation" value="Ctbp1"/>
</dbReference>
<dbReference type="eggNOG" id="KOG0067">
    <property type="taxonomic scope" value="Eukaryota"/>
</dbReference>
<dbReference type="GeneTree" id="ENSGT00940000157061"/>
<dbReference type="HOGENOM" id="CLU_019796_1_3_1"/>
<dbReference type="InParanoid" id="Q9Z2F5"/>
<dbReference type="OrthoDB" id="9991913at2759"/>
<dbReference type="PhylomeDB" id="Q9Z2F5"/>
<dbReference type="Reactome" id="R-RNO-3769402">
    <property type="pathway name" value="Deactivation of the beta-catenin transactivating complex"/>
</dbReference>
<dbReference type="Reactome" id="R-RNO-3899300">
    <property type="pathway name" value="SUMOylation of transcription cofactors"/>
</dbReference>
<dbReference type="Reactome" id="R-RNO-4641265">
    <property type="pathway name" value="Repression of WNT target genes"/>
</dbReference>
<dbReference type="EvolutionaryTrace" id="Q9Z2F5"/>
<dbReference type="PRO" id="PR:Q9Z2F5"/>
<dbReference type="Proteomes" id="UP000002494">
    <property type="component" value="Chromosome 14"/>
</dbReference>
<dbReference type="GO" id="GO:0005737">
    <property type="term" value="C:cytoplasm"/>
    <property type="evidence" value="ECO:0000315"/>
    <property type="project" value="CAFA"/>
</dbReference>
<dbReference type="GO" id="GO:0098894">
    <property type="term" value="C:extrinsic component of presynaptic endocytic zone membrane"/>
    <property type="evidence" value="ECO:0000314"/>
    <property type="project" value="SynGO"/>
</dbReference>
<dbReference type="GO" id="GO:0098982">
    <property type="term" value="C:GABA-ergic synapse"/>
    <property type="evidence" value="ECO:0000266"/>
    <property type="project" value="RGD"/>
</dbReference>
<dbReference type="GO" id="GO:0098978">
    <property type="term" value="C:glutamatergic synapse"/>
    <property type="evidence" value="ECO:0000314"/>
    <property type="project" value="SynGO"/>
</dbReference>
<dbReference type="GO" id="GO:0043005">
    <property type="term" value="C:neuron projection"/>
    <property type="evidence" value="ECO:0007669"/>
    <property type="project" value="UniProtKB-KW"/>
</dbReference>
<dbReference type="GO" id="GO:0005634">
    <property type="term" value="C:nucleus"/>
    <property type="evidence" value="ECO:0000315"/>
    <property type="project" value="CAFA"/>
</dbReference>
<dbReference type="GO" id="GO:0098831">
    <property type="term" value="C:presynaptic active zone cytoplasmic component"/>
    <property type="evidence" value="ECO:0000266"/>
    <property type="project" value="RGD"/>
</dbReference>
<dbReference type="GO" id="GO:0017053">
    <property type="term" value="C:transcription repressor complex"/>
    <property type="evidence" value="ECO:0000250"/>
    <property type="project" value="UniProtKB"/>
</dbReference>
<dbReference type="GO" id="GO:0016746">
    <property type="term" value="F:acyltransferase activity"/>
    <property type="evidence" value="ECO:0000304"/>
    <property type="project" value="RGD"/>
</dbReference>
<dbReference type="GO" id="GO:0003682">
    <property type="term" value="F:chromatin binding"/>
    <property type="evidence" value="ECO:0000266"/>
    <property type="project" value="RGD"/>
</dbReference>
<dbReference type="GO" id="GO:0140297">
    <property type="term" value="F:DNA-binding transcription factor binding"/>
    <property type="evidence" value="ECO:0000266"/>
    <property type="project" value="RGD"/>
</dbReference>
<dbReference type="GO" id="GO:0042802">
    <property type="term" value="F:identical protein binding"/>
    <property type="evidence" value="ECO:0000266"/>
    <property type="project" value="RGD"/>
</dbReference>
<dbReference type="GO" id="GO:0106222">
    <property type="term" value="F:lncRNA binding"/>
    <property type="evidence" value="ECO:0000266"/>
    <property type="project" value="RGD"/>
</dbReference>
<dbReference type="GO" id="GO:0051287">
    <property type="term" value="F:NAD binding"/>
    <property type="evidence" value="ECO:0000314"/>
    <property type="project" value="UniProtKB"/>
</dbReference>
<dbReference type="GO" id="GO:0016616">
    <property type="term" value="F:oxidoreductase activity, acting on the CH-OH group of donors, NAD or NADP as acceptor"/>
    <property type="evidence" value="ECO:0000250"/>
    <property type="project" value="UniProtKB"/>
</dbReference>
<dbReference type="GO" id="GO:0030165">
    <property type="term" value="F:PDZ domain binding"/>
    <property type="evidence" value="ECO:0000353"/>
    <property type="project" value="CAFA"/>
</dbReference>
<dbReference type="GO" id="GO:0019904">
    <property type="term" value="F:protein domain specific binding"/>
    <property type="evidence" value="ECO:0000266"/>
    <property type="project" value="RGD"/>
</dbReference>
<dbReference type="GO" id="GO:0042803">
    <property type="term" value="F:protein homodimerization activity"/>
    <property type="evidence" value="ECO:0000353"/>
    <property type="project" value="UniProtKB"/>
</dbReference>
<dbReference type="GO" id="GO:0061629">
    <property type="term" value="F:RNA polymerase II-specific DNA-binding transcription factor binding"/>
    <property type="evidence" value="ECO:0000266"/>
    <property type="project" value="RGD"/>
</dbReference>
<dbReference type="GO" id="GO:0003713">
    <property type="term" value="F:transcription coactivator activity"/>
    <property type="evidence" value="ECO:0000318"/>
    <property type="project" value="GO_Central"/>
</dbReference>
<dbReference type="GO" id="GO:0001221">
    <property type="term" value="F:transcription coregulator binding"/>
    <property type="evidence" value="ECO:0000318"/>
    <property type="project" value="GO_Central"/>
</dbReference>
<dbReference type="GO" id="GO:0003714">
    <property type="term" value="F:transcription corepressor activity"/>
    <property type="evidence" value="ECO:0000266"/>
    <property type="project" value="RGD"/>
</dbReference>
<dbReference type="GO" id="GO:0001222">
    <property type="term" value="F:transcription corepressor binding"/>
    <property type="evidence" value="ECO:0000266"/>
    <property type="project" value="RGD"/>
</dbReference>
<dbReference type="GO" id="GO:0061025">
    <property type="term" value="P:membrane fusion"/>
    <property type="evidence" value="ECO:0000304"/>
    <property type="project" value="RGD"/>
</dbReference>
<dbReference type="GO" id="GO:0045892">
    <property type="term" value="P:negative regulation of DNA-templated transcription"/>
    <property type="evidence" value="ECO:0000250"/>
    <property type="project" value="UniProtKB"/>
</dbReference>
<dbReference type="GO" id="GO:0000122">
    <property type="term" value="P:negative regulation of transcription by RNA polymerase II"/>
    <property type="evidence" value="ECO:0000266"/>
    <property type="project" value="RGD"/>
</dbReference>
<dbReference type="GO" id="GO:0007219">
    <property type="term" value="P:Notch signaling pathway"/>
    <property type="evidence" value="ECO:0000266"/>
    <property type="project" value="RGD"/>
</dbReference>
<dbReference type="GO" id="GO:0099526">
    <property type="term" value="P:presynapse to nucleus signaling pathway"/>
    <property type="evidence" value="ECO:0000314"/>
    <property type="project" value="SynGO"/>
</dbReference>
<dbReference type="GO" id="GO:0051726">
    <property type="term" value="P:regulation of cell cycle"/>
    <property type="evidence" value="ECO:0000266"/>
    <property type="project" value="RGD"/>
</dbReference>
<dbReference type="GO" id="GO:0006357">
    <property type="term" value="P:regulation of transcription by RNA polymerase II"/>
    <property type="evidence" value="ECO:0000318"/>
    <property type="project" value="GO_Central"/>
</dbReference>
<dbReference type="GO" id="GO:0097091">
    <property type="term" value="P:synaptic vesicle clustering"/>
    <property type="evidence" value="ECO:0000266"/>
    <property type="project" value="RGD"/>
</dbReference>
<dbReference type="GO" id="GO:0048488">
    <property type="term" value="P:synaptic vesicle endocytosis"/>
    <property type="evidence" value="ECO:0000266"/>
    <property type="project" value="RGD"/>
</dbReference>
<dbReference type="GO" id="GO:0050872">
    <property type="term" value="P:white fat cell differentiation"/>
    <property type="evidence" value="ECO:0000250"/>
    <property type="project" value="UniProtKB"/>
</dbReference>
<dbReference type="CDD" id="cd05299">
    <property type="entry name" value="CtBP_dh"/>
    <property type="match status" value="1"/>
</dbReference>
<dbReference type="FunFam" id="3.40.50.720:FF:000012">
    <property type="entry name" value="C-terminal-binding protein 2 isoform 1"/>
    <property type="match status" value="1"/>
</dbReference>
<dbReference type="Gene3D" id="3.40.50.720">
    <property type="entry name" value="NAD(P)-binding Rossmann-like Domain"/>
    <property type="match status" value="2"/>
</dbReference>
<dbReference type="InterPro" id="IPR043322">
    <property type="entry name" value="CtBP"/>
</dbReference>
<dbReference type="InterPro" id="IPR051638">
    <property type="entry name" value="CTBP_dehydrogenase"/>
</dbReference>
<dbReference type="InterPro" id="IPR006139">
    <property type="entry name" value="D-isomer_2_OHA_DH_cat_dom"/>
</dbReference>
<dbReference type="InterPro" id="IPR029753">
    <property type="entry name" value="D-isomer_DH_CS"/>
</dbReference>
<dbReference type="InterPro" id="IPR029752">
    <property type="entry name" value="D-isomer_DH_CS1"/>
</dbReference>
<dbReference type="InterPro" id="IPR006140">
    <property type="entry name" value="D-isomer_DH_NAD-bd"/>
</dbReference>
<dbReference type="InterPro" id="IPR036291">
    <property type="entry name" value="NAD(P)-bd_dom_sf"/>
</dbReference>
<dbReference type="PANTHER" id="PTHR46029">
    <property type="entry name" value="C-TERMINAL-BINDING PROTEIN"/>
    <property type="match status" value="1"/>
</dbReference>
<dbReference type="PANTHER" id="PTHR46029:SF2">
    <property type="entry name" value="C-TERMINAL-BINDING PROTEIN 1"/>
    <property type="match status" value="1"/>
</dbReference>
<dbReference type="Pfam" id="PF00389">
    <property type="entry name" value="2-Hacid_dh"/>
    <property type="match status" value="1"/>
</dbReference>
<dbReference type="Pfam" id="PF02826">
    <property type="entry name" value="2-Hacid_dh_C"/>
    <property type="match status" value="1"/>
</dbReference>
<dbReference type="SUPFAM" id="SSF52283">
    <property type="entry name" value="Formate/glycerate dehydrogenase catalytic domain-like"/>
    <property type="match status" value="1"/>
</dbReference>
<dbReference type="SUPFAM" id="SSF51735">
    <property type="entry name" value="NAD(P)-binding Rossmann-fold domains"/>
    <property type="match status" value="1"/>
</dbReference>
<dbReference type="PROSITE" id="PS00065">
    <property type="entry name" value="D_2_HYDROXYACID_DH_1"/>
    <property type="match status" value="1"/>
</dbReference>
<dbReference type="PROSITE" id="PS00671">
    <property type="entry name" value="D_2_HYDROXYACID_DH_3"/>
    <property type="match status" value="1"/>
</dbReference>
<sequence>MSGVRPPIMNGPMHPRPLVALLDGRDCTVEMPILKDVATVAFCDAQSTQEIHEKVLNEAVGALMYHTITLTREDLEKFKALRIIVRIGSGFDNIDIKSAGDLGIAVCNVPAASVEETADSTLCHILNLYRRTTWLHQALREGTRVQSVEQIREVASGAARIRGETLGIIGLGRVGQAVALRAKAFGFNVLFYDPYLSDGIERALGLQRVSTLQDLLFHSDCVTLHCGLNEHNHHLINDFTVKQMRQGAFLVNTARGGLVDEKALAQALKEGRIRGAALDVHESEPFSFSQGPLKDAPNLICTPHAAWYSEQASIEMREEAAREIRRAITGRIPDSLKNCVNKDHLTAATHWASMDPAVVHPELNGAAYSRYPPGVVSVAPTGIPAAVEGIVPSAMSLSHGLPPVAHPPHAPSPGQTVKPEADRDHTTDQL</sequence>
<gene>
    <name type="primary">Ctbp1</name>
    <name type="synonym">Bars</name>
    <name type="synonym">Ctbp3</name>
</gene>
<name>CTBP1_RAT</name>
<evidence type="ECO:0000250" key="1"/>
<evidence type="ECO:0000250" key="2">
    <source>
        <dbReference type="UniProtKB" id="O88712"/>
    </source>
</evidence>
<evidence type="ECO:0000250" key="3">
    <source>
        <dbReference type="UniProtKB" id="Q13363"/>
    </source>
</evidence>
<evidence type="ECO:0000256" key="4">
    <source>
        <dbReference type="SAM" id="MobiDB-lite"/>
    </source>
</evidence>
<evidence type="ECO:0000269" key="5">
    <source>
    </source>
</evidence>
<evidence type="ECO:0000269" key="6">
    <source>
    </source>
</evidence>
<evidence type="ECO:0000269" key="7">
    <source>
    </source>
</evidence>
<evidence type="ECO:0000269" key="8">
    <source>
    </source>
</evidence>
<evidence type="ECO:0000269" key="9">
    <source>
    </source>
</evidence>
<evidence type="ECO:0000269" key="10">
    <source>
    </source>
</evidence>
<evidence type="ECO:0000305" key="11"/>
<evidence type="ECO:0007829" key="12">
    <source>
        <dbReference type="PDB" id="1HKU"/>
    </source>
</evidence>
<evidence type="ECO:0007829" key="13">
    <source>
        <dbReference type="PDB" id="1HL3"/>
    </source>
</evidence>
<evidence type="ECO:0007829" key="14">
    <source>
        <dbReference type="PDB" id="3GA0"/>
    </source>
</evidence>
<protein>
    <recommendedName>
        <fullName>C-terminal-binding protein 1</fullName>
        <shortName>CtBP1</shortName>
        <ecNumber>1.1.1.-</ecNumber>
    </recommendedName>
    <alternativeName>
        <fullName>50 kDa BFA-dependent ADP-ribosylation substrate</fullName>
    </alternativeName>
    <alternativeName>
        <fullName>BARS-50</fullName>
    </alternativeName>
    <alternativeName>
        <fullName>C-terminal-binding protein 3</fullName>
        <shortName>CtBP3</shortName>
    </alternativeName>
</protein>
<proteinExistence type="evidence at protein level"/>
<keyword id="KW-0002">3D-structure</keyword>
<keyword id="KW-0013">ADP-ribosylation</keyword>
<keyword id="KW-0963">Cytoplasm</keyword>
<keyword id="KW-0221">Differentiation</keyword>
<keyword id="KW-0903">Direct protein sequencing</keyword>
<keyword id="KW-1017">Isopeptide bond</keyword>
<keyword id="KW-0520">NAD</keyword>
<keyword id="KW-0539">Nucleus</keyword>
<keyword id="KW-0560">Oxidoreductase</keyword>
<keyword id="KW-0597">Phosphoprotein</keyword>
<keyword id="KW-1185">Reference proteome</keyword>
<keyword id="KW-0678">Repressor</keyword>
<keyword id="KW-0770">Synapse</keyword>
<keyword id="KW-0771">Synaptosome</keyword>
<keyword id="KW-0804">Transcription</keyword>
<keyword id="KW-0805">Transcription regulation</keyword>
<keyword id="KW-0832">Ubl conjugation</keyword>
<comment type="function">
    <text evidence="5 6 10">Corepressor targeting diverse transcription regulators such as GLIS2 or BCL6. Has dehydrogenase activity. Involved in controlling the equilibrium between tubular and stacked structures in the Golgi complex. Functions in brown adipose tissue (BAT) differentiation.</text>
</comment>
<comment type="cofactor">
    <cofactor>
        <name>NAD(+)</name>
        <dbReference type="ChEBI" id="CHEBI:57540"/>
    </cofactor>
    <text>Cofactor binding induces a conformational change.</text>
</comment>
<comment type="subunit">
    <text evidence="2 3 6 7 8 9">Homo- or heterodimer. Heterodimer with CTBP2. Interacts with ELK3 (via its PXDLS motif). Interacts with RBBP8 (via its PXDLS motif); the interaction is disrupted by binding to adenovirus E1A. Interacts with PNN, MECOM and ZFHX1B. Interacts with ZNF366 (via PXDLS motif) (By similarity). Interaction with SATB1 (non-acetylated form); the interaction stabilizes its attachment to DNA and promotes transcription repression. Interacts with PRDM16; the interaction represses white adipose tissue (WAT)-specific genes expression. Interacts with GLIS2, HIPK2, FOXP1, FOXP2, HDAC4, HDAC5, HDAC9, NRIP1 and WIZ. Interacts with ZNF217. Interacts with BCL6; the interaction is required for BCL6 transcriptional autoinhibition and inhibition of some BCL6 target genes. Interacts with IKZF4 (By similarity). Interacts with MCRIP1 (unphosphorylated form, via the PXDLS motif); competitively inhibiting CTBP-ZEB1 interaction (By similarity). Interacts with Bassoon/BSN; this interaction targets and anchors CTBP1 to presynapses (PubMed:25652077). Interacts with SIMC1 (By similarity).</text>
</comment>
<comment type="subcellular location">
    <subcellularLocation>
        <location evidence="3">Cytoplasm</location>
    </subcellularLocation>
    <subcellularLocation>
        <location evidence="9">Nucleus</location>
    </subcellularLocation>
    <subcellularLocation>
        <location evidence="9">Synapse</location>
        <location evidence="9">Synaptosome</location>
    </subcellularLocation>
</comment>
<comment type="PTM">
    <text evidence="1">The level of phosphorylation appears to be regulated during the cell cycle. Phosphorylation by HIPK2 on Ser-412 induces proteasomal degradation (By similarity).</text>
</comment>
<comment type="PTM">
    <text>ADP-ribosylated; when cells are exposed to brefeldin A.</text>
</comment>
<comment type="PTM">
    <text evidence="1">Sumoylation on Lys-418 is promoted by the E3 SUMO-protein ligase CBX4.</text>
</comment>
<comment type="similarity">
    <text evidence="11">Belongs to the D-isomer specific 2-hydroxyacid dehydrogenase family.</text>
</comment>